<keyword id="KW-0131">Cell cycle</keyword>
<keyword id="KW-0132">Cell division</keyword>
<keyword id="KW-0238">DNA-binding</keyword>
<reference key="1">
    <citation type="journal article" date="2008" name="J. Bacteriol.">
        <title>Genome sequence of Staphylococcus aureus strain Newman and comparative analysis of staphylococcal genomes: polymorphism and evolution of two major pathogenicity islands.</title>
        <authorList>
            <person name="Baba T."/>
            <person name="Bae T."/>
            <person name="Schneewind O."/>
            <person name="Takeuchi F."/>
            <person name="Hiramatsu K."/>
        </authorList>
    </citation>
    <scope>NUCLEOTIDE SEQUENCE [LARGE SCALE GENOMIC DNA]</scope>
    <source>
        <strain>Newman</strain>
    </source>
</reference>
<organism>
    <name type="scientific">Staphylococcus aureus (strain Newman)</name>
    <dbReference type="NCBI Taxonomy" id="426430"/>
    <lineage>
        <taxon>Bacteria</taxon>
        <taxon>Bacillati</taxon>
        <taxon>Bacillota</taxon>
        <taxon>Bacilli</taxon>
        <taxon>Bacillales</taxon>
        <taxon>Staphylococcaceae</taxon>
        <taxon>Staphylococcus</taxon>
    </lineage>
</organism>
<dbReference type="EMBL" id="AP009351">
    <property type="protein sequence ID" value="BAF67007.1"/>
    <property type="molecule type" value="Genomic_DNA"/>
</dbReference>
<dbReference type="RefSeq" id="WP_000006551.1">
    <property type="nucleotide sequence ID" value="NZ_JBBIAE010000002.1"/>
</dbReference>
<dbReference type="SMR" id="A6QF75"/>
<dbReference type="KEGG" id="sae:NWMN_0735"/>
<dbReference type="HOGENOM" id="CLU_053282_0_0_9"/>
<dbReference type="Proteomes" id="UP000006386">
    <property type="component" value="Chromosome"/>
</dbReference>
<dbReference type="GO" id="GO:0003677">
    <property type="term" value="F:DNA binding"/>
    <property type="evidence" value="ECO:0007669"/>
    <property type="project" value="UniProtKB-UniRule"/>
</dbReference>
<dbReference type="GO" id="GO:0051301">
    <property type="term" value="P:cell division"/>
    <property type="evidence" value="ECO:0007669"/>
    <property type="project" value="UniProtKB-UniRule"/>
</dbReference>
<dbReference type="GO" id="GO:0043937">
    <property type="term" value="P:regulation of sporulation"/>
    <property type="evidence" value="ECO:0007669"/>
    <property type="project" value="InterPro"/>
</dbReference>
<dbReference type="FunFam" id="3.10.28.10:FF:000002">
    <property type="entry name" value="Probable cell division protein WhiA"/>
    <property type="match status" value="1"/>
</dbReference>
<dbReference type="Gene3D" id="3.10.28.10">
    <property type="entry name" value="Homing endonucleases"/>
    <property type="match status" value="1"/>
</dbReference>
<dbReference type="HAMAP" id="MF_01420">
    <property type="entry name" value="HTH_type_WhiA"/>
    <property type="match status" value="1"/>
</dbReference>
<dbReference type="InterPro" id="IPR027434">
    <property type="entry name" value="Homing_endonucl"/>
</dbReference>
<dbReference type="InterPro" id="IPR018478">
    <property type="entry name" value="Sporu_reg_WhiA_N_dom"/>
</dbReference>
<dbReference type="InterPro" id="IPR003802">
    <property type="entry name" value="Sporulation_regulator_WhiA"/>
</dbReference>
<dbReference type="InterPro" id="IPR023054">
    <property type="entry name" value="Sporulation_regulator_WhiA_C"/>
</dbReference>
<dbReference type="InterPro" id="IPR039518">
    <property type="entry name" value="WhiA_LAGLIDADG_dom"/>
</dbReference>
<dbReference type="NCBIfam" id="TIGR00647">
    <property type="entry name" value="DNA_bind_WhiA"/>
    <property type="match status" value="1"/>
</dbReference>
<dbReference type="PANTHER" id="PTHR37307">
    <property type="entry name" value="CELL DIVISION PROTEIN WHIA-RELATED"/>
    <property type="match status" value="1"/>
</dbReference>
<dbReference type="PANTHER" id="PTHR37307:SF1">
    <property type="entry name" value="CELL DIVISION PROTEIN WHIA-RELATED"/>
    <property type="match status" value="1"/>
</dbReference>
<dbReference type="Pfam" id="PF02650">
    <property type="entry name" value="HTH_WhiA"/>
    <property type="match status" value="1"/>
</dbReference>
<dbReference type="Pfam" id="PF14527">
    <property type="entry name" value="LAGLIDADG_WhiA"/>
    <property type="match status" value="1"/>
</dbReference>
<dbReference type="Pfam" id="PF10298">
    <property type="entry name" value="WhiA_N"/>
    <property type="match status" value="1"/>
</dbReference>
<dbReference type="SUPFAM" id="SSF55608">
    <property type="entry name" value="Homing endonucleases"/>
    <property type="match status" value="1"/>
</dbReference>
<feature type="chain" id="PRO_0000376562" description="Probable cell division protein WhiA">
    <location>
        <begin position="1"/>
        <end position="314"/>
    </location>
</feature>
<feature type="DNA-binding region" description="H-T-H motif" evidence="1">
    <location>
        <begin position="274"/>
        <end position="308"/>
    </location>
</feature>
<comment type="function">
    <text evidence="1">Involved in cell division and chromosome segregation.</text>
</comment>
<comment type="similarity">
    <text evidence="1">Belongs to the WhiA family.</text>
</comment>
<proteinExistence type="inferred from homology"/>
<evidence type="ECO:0000255" key="1">
    <source>
        <dbReference type="HAMAP-Rule" id="MF_01420"/>
    </source>
</evidence>
<accession>A6QF75</accession>
<name>WHIA_STAAE</name>
<gene>
    <name evidence="1" type="primary">whiA</name>
    <name type="ordered locus">NWMN_0735</name>
</gene>
<protein>
    <recommendedName>
        <fullName evidence="1">Probable cell division protein WhiA</fullName>
    </recommendedName>
</protein>
<sequence>MSFASEMKNELTRIDVDEMNAKAELSALIRMNGALSLSNQQFVINVQTENATTARRIYSLIKRVFNVEVEILVRKKMKLKKNNIYICRTKMKAKEILDELGILKDGIFTHEIDHSMIQDDEMRRSYLRGAFLAGGSVNNPETSSYHLEIFSQNESHAEGLTKLMNSYELNAKHLERKKGSITYLKEAEKISDFLSLIGGYQALLKFEDVRIVRDMRNSVNRLVNCETANLNKTVSAAMKQVESIKLIDKEIGIENLPDRLREIARIRVEHQEISLKELGEMVSTGPISKSGVNHRLRKLNDLADKIRNGEQIEL</sequence>